<accession>A4GYW5</accession>
<keyword id="KW-0150">Chloroplast</keyword>
<keyword id="KW-0201">Cytochrome c-type biogenesis</keyword>
<keyword id="KW-0472">Membrane</keyword>
<keyword id="KW-0934">Plastid</keyword>
<keyword id="KW-1185">Reference proteome</keyword>
<keyword id="KW-0793">Thylakoid</keyword>
<keyword id="KW-0812">Transmembrane</keyword>
<keyword id="KW-1133">Transmembrane helix</keyword>
<evidence type="ECO:0000255" key="1">
    <source>
        <dbReference type="HAMAP-Rule" id="MF_01391"/>
    </source>
</evidence>
<organism>
    <name type="scientific">Populus trichocarpa</name>
    <name type="common">Western balsam poplar</name>
    <name type="synonym">Populus balsamifera subsp. trichocarpa</name>
    <dbReference type="NCBI Taxonomy" id="3694"/>
    <lineage>
        <taxon>Eukaryota</taxon>
        <taxon>Viridiplantae</taxon>
        <taxon>Streptophyta</taxon>
        <taxon>Embryophyta</taxon>
        <taxon>Tracheophyta</taxon>
        <taxon>Spermatophyta</taxon>
        <taxon>Magnoliopsida</taxon>
        <taxon>eudicotyledons</taxon>
        <taxon>Gunneridae</taxon>
        <taxon>Pentapetalae</taxon>
        <taxon>rosids</taxon>
        <taxon>fabids</taxon>
        <taxon>Malpighiales</taxon>
        <taxon>Salicaceae</taxon>
        <taxon>Saliceae</taxon>
        <taxon>Populus</taxon>
    </lineage>
</organism>
<feature type="chain" id="PRO_0000353788" description="Cytochrome c biogenesis protein CcsA">
    <location>
        <begin position="1"/>
        <end position="321"/>
    </location>
</feature>
<feature type="transmembrane region" description="Helical" evidence="1">
    <location>
        <begin position="17"/>
        <end position="37"/>
    </location>
</feature>
<feature type="transmembrane region" description="Helical" evidence="1">
    <location>
        <begin position="48"/>
        <end position="68"/>
    </location>
</feature>
<feature type="transmembrane region" description="Helical" evidence="1">
    <location>
        <begin position="71"/>
        <end position="91"/>
    </location>
</feature>
<feature type="transmembrane region" description="Helical" evidence="1">
    <location>
        <begin position="98"/>
        <end position="118"/>
    </location>
</feature>
<feature type="transmembrane region" description="Helical" evidence="1">
    <location>
        <begin position="143"/>
        <end position="163"/>
    </location>
</feature>
<feature type="transmembrane region" description="Helical" evidence="1">
    <location>
        <begin position="225"/>
        <end position="245"/>
    </location>
</feature>
<feature type="transmembrane region" description="Helical" evidence="1">
    <location>
        <begin position="259"/>
        <end position="273"/>
    </location>
</feature>
<feature type="transmembrane region" description="Helical" evidence="1">
    <location>
        <begin position="286"/>
        <end position="306"/>
    </location>
</feature>
<proteinExistence type="inferred from homology"/>
<protein>
    <recommendedName>
        <fullName evidence="1">Cytochrome c biogenesis protein CcsA</fullName>
    </recommendedName>
</protein>
<geneLocation type="chloroplast"/>
<name>CCSA_POPTR</name>
<sequence length="321" mass="36826">MIFLTLEHILTHISFSVVSIVIIIHFLTLLVNEFVGLYDSSEKGMLTTFFCLTGLLITRWIYSGHLPISDLYESLIFLSWIFSIIHMVPYFKKHKNYLSTITAPSTFFTQGFATWGLLTDMHQSKILVPALQSQWLIMHVSMMVSGYAALLCGSLLSAALLVITFRKVIRIVGKNNNLLNDSFPVDEIQYMMEKKSILKNTFFPSSRNYYRFQLIQQLDHWGFRILSIGFLFLTIGILSGAVWANEAWGSYWNWDPKETWAFITWTIFAIYFHTRTNKNLEGLNSAIVASIGFLIIWICYFGVNLLGIGLHSYGSFTLISN</sequence>
<reference key="1">
    <citation type="journal article" date="2006" name="Science">
        <title>The genome of black cottonwood, Populus trichocarpa (Torr. &amp; Gray).</title>
        <authorList>
            <person name="Tuskan G.A."/>
            <person name="Difazio S."/>
            <person name="Jansson S."/>
            <person name="Bohlmann J."/>
            <person name="Grigoriev I."/>
            <person name="Hellsten U."/>
            <person name="Putnam N."/>
            <person name="Ralph S."/>
            <person name="Rombauts S."/>
            <person name="Salamov A."/>
            <person name="Schein J."/>
            <person name="Sterck L."/>
            <person name="Aerts A."/>
            <person name="Bhalerao R.R."/>
            <person name="Bhalerao R.P."/>
            <person name="Blaudez D."/>
            <person name="Boerjan W."/>
            <person name="Brun A."/>
            <person name="Brunner A."/>
            <person name="Busov V."/>
            <person name="Campbell M."/>
            <person name="Carlson J."/>
            <person name="Chalot M."/>
            <person name="Chapman J."/>
            <person name="Chen G.-L."/>
            <person name="Cooper D."/>
            <person name="Coutinho P.M."/>
            <person name="Couturier J."/>
            <person name="Covert S."/>
            <person name="Cronk Q."/>
            <person name="Cunningham R."/>
            <person name="Davis J."/>
            <person name="Degroeve S."/>
            <person name="Dejardin A."/>
            <person name="dePamphilis C.W."/>
            <person name="Detter J."/>
            <person name="Dirks B."/>
            <person name="Dubchak I."/>
            <person name="Duplessis S."/>
            <person name="Ehlting J."/>
            <person name="Ellis B."/>
            <person name="Gendler K."/>
            <person name="Goodstein D."/>
            <person name="Gribskov M."/>
            <person name="Grimwood J."/>
            <person name="Groover A."/>
            <person name="Gunter L."/>
            <person name="Hamberger B."/>
            <person name="Heinze B."/>
            <person name="Helariutta Y."/>
            <person name="Henrissat B."/>
            <person name="Holligan D."/>
            <person name="Holt R."/>
            <person name="Huang W."/>
            <person name="Islam-Faridi N."/>
            <person name="Jones S."/>
            <person name="Jones-Rhoades M."/>
            <person name="Jorgensen R."/>
            <person name="Joshi C."/>
            <person name="Kangasjaervi J."/>
            <person name="Karlsson J."/>
            <person name="Kelleher C."/>
            <person name="Kirkpatrick R."/>
            <person name="Kirst M."/>
            <person name="Kohler A."/>
            <person name="Kalluri U."/>
            <person name="Larimer F."/>
            <person name="Leebens-Mack J."/>
            <person name="Leple J.-C."/>
            <person name="Locascio P."/>
            <person name="Lou Y."/>
            <person name="Lucas S."/>
            <person name="Martin F."/>
            <person name="Montanini B."/>
            <person name="Napoli C."/>
            <person name="Nelson D.R."/>
            <person name="Nelson C."/>
            <person name="Nieminen K."/>
            <person name="Nilsson O."/>
            <person name="Pereda V."/>
            <person name="Peter G."/>
            <person name="Philippe R."/>
            <person name="Pilate G."/>
            <person name="Poliakov A."/>
            <person name="Razumovskaya J."/>
            <person name="Richardson P."/>
            <person name="Rinaldi C."/>
            <person name="Ritland K."/>
            <person name="Rouze P."/>
            <person name="Ryaboy D."/>
            <person name="Schmutz J."/>
            <person name="Schrader J."/>
            <person name="Segerman B."/>
            <person name="Shin H."/>
            <person name="Siddiqui A."/>
            <person name="Sterky F."/>
            <person name="Terry A."/>
            <person name="Tsai C.-J."/>
            <person name="Uberbacher E."/>
            <person name="Unneberg P."/>
            <person name="Vahala J."/>
            <person name="Wall K."/>
            <person name="Wessler S."/>
            <person name="Yang G."/>
            <person name="Yin T."/>
            <person name="Douglas C."/>
            <person name="Marra M."/>
            <person name="Sandberg G."/>
            <person name="Van de Peer Y."/>
            <person name="Rokhsar D.S."/>
        </authorList>
    </citation>
    <scope>NUCLEOTIDE SEQUENCE [LARGE SCALE GENOMIC DNA]</scope>
    <source>
        <strain>cv. Nisqually</strain>
    </source>
</reference>
<comment type="function">
    <text evidence="1">Required during biogenesis of c-type cytochromes (cytochrome c6 and cytochrome f) at the step of heme attachment.</text>
</comment>
<comment type="subunit">
    <text evidence="1">May interact with Ccs1.</text>
</comment>
<comment type="subcellular location">
    <subcellularLocation>
        <location evidence="1">Plastid</location>
        <location evidence="1">Chloroplast thylakoid membrane</location>
        <topology evidence="1">Multi-pass membrane protein</topology>
    </subcellularLocation>
</comment>
<comment type="similarity">
    <text evidence="1">Belongs to the CcmF/CycK/Ccl1/NrfE/CcsA family.</text>
</comment>
<dbReference type="EMBL" id="EF489041">
    <property type="protein sequence ID" value="ABO36760.1"/>
    <property type="molecule type" value="Genomic_DNA"/>
</dbReference>
<dbReference type="RefSeq" id="YP_001109556.1">
    <property type="nucleotide sequence ID" value="NC_009143.1"/>
</dbReference>
<dbReference type="SMR" id="A4GYW5"/>
<dbReference type="FunCoup" id="A4GYW5">
    <property type="interactions" value="15"/>
</dbReference>
<dbReference type="STRING" id="3694.A4GYW5"/>
<dbReference type="GeneID" id="4929739"/>
<dbReference type="KEGG" id="pop:4929739"/>
<dbReference type="InParanoid" id="A4GYW5"/>
<dbReference type="OrthoDB" id="1640at2759"/>
<dbReference type="Proteomes" id="UP000006729">
    <property type="component" value="Chloroplast"/>
</dbReference>
<dbReference type="ExpressionAtlas" id="A4GYW5">
    <property type="expression patterns" value="baseline"/>
</dbReference>
<dbReference type="GO" id="GO:0009535">
    <property type="term" value="C:chloroplast thylakoid membrane"/>
    <property type="evidence" value="ECO:0007669"/>
    <property type="project" value="UniProtKB-SubCell"/>
</dbReference>
<dbReference type="GO" id="GO:0020037">
    <property type="term" value="F:heme binding"/>
    <property type="evidence" value="ECO:0007669"/>
    <property type="project" value="InterPro"/>
</dbReference>
<dbReference type="GO" id="GO:0017004">
    <property type="term" value="P:cytochrome complex assembly"/>
    <property type="evidence" value="ECO:0007669"/>
    <property type="project" value="UniProtKB-UniRule"/>
</dbReference>
<dbReference type="HAMAP" id="MF_01391">
    <property type="entry name" value="CytC_CcsA"/>
    <property type="match status" value="1"/>
</dbReference>
<dbReference type="InterPro" id="IPR002541">
    <property type="entry name" value="Cyt_c_assembly"/>
</dbReference>
<dbReference type="InterPro" id="IPR017562">
    <property type="entry name" value="Cyt_c_biogenesis_CcsA"/>
</dbReference>
<dbReference type="InterPro" id="IPR045062">
    <property type="entry name" value="Cyt_c_biogenesis_CcsA/CcmC"/>
</dbReference>
<dbReference type="NCBIfam" id="TIGR03144">
    <property type="entry name" value="cytochr_II_ccsB"/>
    <property type="match status" value="1"/>
</dbReference>
<dbReference type="PANTHER" id="PTHR30071:SF1">
    <property type="entry name" value="CYTOCHROME B_B6 PROTEIN-RELATED"/>
    <property type="match status" value="1"/>
</dbReference>
<dbReference type="PANTHER" id="PTHR30071">
    <property type="entry name" value="HEME EXPORTER PROTEIN C"/>
    <property type="match status" value="1"/>
</dbReference>
<dbReference type="Pfam" id="PF01578">
    <property type="entry name" value="Cytochrom_C_asm"/>
    <property type="match status" value="1"/>
</dbReference>
<gene>
    <name evidence="1" type="primary">ccsA</name>
    <name type="ordered locus">Poptr_cp078</name>
</gene>